<accession>A7ZXL8</accession>
<feature type="chain" id="PRO_1000068535" description="Enterobactin exporter EntS">
    <location>
        <begin position="1"/>
        <end position="416"/>
    </location>
</feature>
<feature type="topological domain" description="Cytoplasmic" evidence="1">
    <location>
        <begin position="1"/>
        <end position="21"/>
    </location>
</feature>
<feature type="transmembrane region" description="Helical" evidence="1">
    <location>
        <begin position="22"/>
        <end position="42"/>
    </location>
</feature>
<feature type="topological domain" description="Periplasmic" evidence="1">
    <location>
        <begin position="43"/>
        <end position="55"/>
    </location>
</feature>
<feature type="transmembrane region" description="Helical" evidence="1">
    <location>
        <begin position="56"/>
        <end position="76"/>
    </location>
</feature>
<feature type="topological domain" description="Cytoplasmic" evidence="1">
    <location>
        <begin position="77"/>
        <end position="83"/>
    </location>
</feature>
<feature type="transmembrane region" description="Helical" evidence="1">
    <location>
        <begin position="84"/>
        <end position="104"/>
    </location>
</feature>
<feature type="topological domain" description="Periplasmic" evidence="1">
    <location>
        <begin position="105"/>
        <end position="109"/>
    </location>
</feature>
<feature type="transmembrane region" description="Helical" evidence="1">
    <location>
        <begin position="110"/>
        <end position="130"/>
    </location>
</feature>
<feature type="topological domain" description="Cytoplasmic" evidence="1">
    <location>
        <begin position="131"/>
        <end position="156"/>
    </location>
</feature>
<feature type="transmembrane region" description="Helical" evidence="1">
    <location>
        <begin position="157"/>
        <end position="177"/>
    </location>
</feature>
<feature type="topological domain" description="Periplasmic" evidence="1">
    <location>
        <position position="178"/>
    </location>
</feature>
<feature type="transmembrane region" description="Helical" evidence="1">
    <location>
        <begin position="179"/>
        <end position="199"/>
    </location>
</feature>
<feature type="topological domain" description="Cytoplasmic" evidence="1">
    <location>
        <begin position="200"/>
        <end position="218"/>
    </location>
</feature>
<feature type="transmembrane region" description="Helical" evidence="1">
    <location>
        <begin position="219"/>
        <end position="239"/>
    </location>
</feature>
<feature type="topological domain" description="Periplasmic" evidence="1">
    <location>
        <begin position="240"/>
        <end position="256"/>
    </location>
</feature>
<feature type="transmembrane region" description="Helical" evidence="1">
    <location>
        <begin position="257"/>
        <end position="277"/>
    </location>
</feature>
<feature type="topological domain" description="Cytoplasmic" evidence="1">
    <location>
        <begin position="278"/>
        <end position="287"/>
    </location>
</feature>
<feature type="transmembrane region" description="Helical" evidence="1">
    <location>
        <begin position="288"/>
        <end position="307"/>
    </location>
</feature>
<feature type="topological domain" description="Periplasmic" evidence="1">
    <location>
        <begin position="308"/>
        <end position="313"/>
    </location>
</feature>
<feature type="transmembrane region" description="Helical" evidence="1">
    <location>
        <begin position="314"/>
        <end position="336"/>
    </location>
</feature>
<feature type="topological domain" description="Cytoplasmic" evidence="1">
    <location>
        <begin position="337"/>
        <end position="356"/>
    </location>
</feature>
<feature type="transmembrane region" description="Helical" evidence="1">
    <location>
        <begin position="357"/>
        <end position="377"/>
    </location>
</feature>
<feature type="topological domain" description="Periplasmic" evidence="1">
    <location>
        <position position="378"/>
    </location>
</feature>
<feature type="transmembrane region" description="Helical" evidence="1">
    <location>
        <begin position="379"/>
        <end position="399"/>
    </location>
</feature>
<feature type="topological domain" description="Cytoplasmic" evidence="1">
    <location>
        <begin position="400"/>
        <end position="416"/>
    </location>
</feature>
<organism>
    <name type="scientific">Escherichia coli O9:H4 (strain HS)</name>
    <dbReference type="NCBI Taxonomy" id="331112"/>
    <lineage>
        <taxon>Bacteria</taxon>
        <taxon>Pseudomonadati</taxon>
        <taxon>Pseudomonadota</taxon>
        <taxon>Gammaproteobacteria</taxon>
        <taxon>Enterobacterales</taxon>
        <taxon>Enterobacteriaceae</taxon>
        <taxon>Escherichia</taxon>
    </lineage>
</organism>
<sequence>MNKQSWLLNLSLLKTHPAFRAVFLARFISIVSLGLLGVAVPVQIQMMTHSTWQVGLSVTLTGGAMFVGLMVGGVLADRYERKKVILLARGTCGIGFIGLCLNALLPEPSLLAIYLLGLWDGFFASLGVTALLAATPALVGRENLMQAGAITMLTVRLGSVISPMIGGLLLATGGVAWNYGLAAAGTFITLLPLLSLPALPPPPQPREHPLKSLLAGFRFLLASPLVGGIALLGGLLTMASAVRVLYPALADNWQMSAAQIGFLYAAIPLGAAIGALTSGKLAHSARPGLLMLLSTLGSFLAIGLFGLMPMWILGVVCLALFGWLSAVSSLLQYTMLQTQTPEAMLGRINGLWTAQNVTGDAIGAALLGGLGAMMTPVASASASGFGLLIIGVLLLLVLVELRHFRQTPPQVTASDS</sequence>
<comment type="function">
    <text evidence="1">Component of an export pathway for enterobactin.</text>
</comment>
<comment type="subcellular location">
    <subcellularLocation>
        <location evidence="1">Cell inner membrane</location>
        <topology evidence="1">Multi-pass membrane protein</topology>
    </subcellularLocation>
</comment>
<comment type="similarity">
    <text evidence="1">Belongs to the major facilitator superfamily. EntS (TC 2.A.1.38) family.</text>
</comment>
<evidence type="ECO:0000255" key="1">
    <source>
        <dbReference type="HAMAP-Rule" id="MF_01436"/>
    </source>
</evidence>
<name>ENTS_ECOHS</name>
<gene>
    <name evidence="1" type="primary">entS</name>
    <name type="ordered locus">EcHS_A0642</name>
</gene>
<dbReference type="EMBL" id="CP000802">
    <property type="protein sequence ID" value="ABV05022.1"/>
    <property type="molecule type" value="Genomic_DNA"/>
</dbReference>
<dbReference type="RefSeq" id="WP_001041786.1">
    <property type="nucleotide sequence ID" value="NC_009800.1"/>
</dbReference>
<dbReference type="SMR" id="A7ZXL8"/>
<dbReference type="KEGG" id="ecx:EcHS_A0642"/>
<dbReference type="HOGENOM" id="CLU_034180_11_0_6"/>
<dbReference type="GO" id="GO:0005886">
    <property type="term" value="C:plasma membrane"/>
    <property type="evidence" value="ECO:0007669"/>
    <property type="project" value="UniProtKB-SubCell"/>
</dbReference>
<dbReference type="GO" id="GO:0042931">
    <property type="term" value="F:enterobactin transmembrane transporter activity"/>
    <property type="evidence" value="ECO:0007669"/>
    <property type="project" value="InterPro"/>
</dbReference>
<dbReference type="CDD" id="cd06173">
    <property type="entry name" value="MFS_MefA_like"/>
    <property type="match status" value="1"/>
</dbReference>
<dbReference type="FunFam" id="1.20.1250.20:FF:000056">
    <property type="entry name" value="Enterobactin exporter EntS"/>
    <property type="match status" value="1"/>
</dbReference>
<dbReference type="Gene3D" id="1.20.1250.20">
    <property type="entry name" value="MFS general substrate transporter like domains"/>
    <property type="match status" value="1"/>
</dbReference>
<dbReference type="HAMAP" id="MF_01436">
    <property type="entry name" value="MFS_EntS"/>
    <property type="match status" value="1"/>
</dbReference>
<dbReference type="InterPro" id="IPR023722">
    <property type="entry name" value="Enterobactin_exp_EntS"/>
</dbReference>
<dbReference type="InterPro" id="IPR020846">
    <property type="entry name" value="MFS_dom"/>
</dbReference>
<dbReference type="InterPro" id="IPR036259">
    <property type="entry name" value="MFS_trans_sf"/>
</dbReference>
<dbReference type="InterPro" id="IPR010290">
    <property type="entry name" value="TM_effector"/>
</dbReference>
<dbReference type="NCBIfam" id="NF007792">
    <property type="entry name" value="PRK10489.1"/>
    <property type="match status" value="1"/>
</dbReference>
<dbReference type="PANTHER" id="PTHR23513:SF9">
    <property type="entry name" value="ENTEROBACTIN EXPORTER ENTS"/>
    <property type="match status" value="1"/>
</dbReference>
<dbReference type="PANTHER" id="PTHR23513">
    <property type="entry name" value="INTEGRAL MEMBRANE EFFLUX PROTEIN-RELATED"/>
    <property type="match status" value="1"/>
</dbReference>
<dbReference type="Pfam" id="PF05977">
    <property type="entry name" value="MFS_3"/>
    <property type="match status" value="1"/>
</dbReference>
<dbReference type="SUPFAM" id="SSF103473">
    <property type="entry name" value="MFS general substrate transporter"/>
    <property type="match status" value="1"/>
</dbReference>
<dbReference type="PROSITE" id="PS50850">
    <property type="entry name" value="MFS"/>
    <property type="match status" value="1"/>
</dbReference>
<proteinExistence type="inferred from homology"/>
<protein>
    <recommendedName>
        <fullName evidence="1">Enterobactin exporter EntS</fullName>
    </recommendedName>
</protein>
<keyword id="KW-0997">Cell inner membrane</keyword>
<keyword id="KW-1003">Cell membrane</keyword>
<keyword id="KW-0472">Membrane</keyword>
<keyword id="KW-0812">Transmembrane</keyword>
<keyword id="KW-1133">Transmembrane helix</keyword>
<keyword id="KW-0813">Transport</keyword>
<reference key="1">
    <citation type="journal article" date="2008" name="J. Bacteriol.">
        <title>The pangenome structure of Escherichia coli: comparative genomic analysis of E. coli commensal and pathogenic isolates.</title>
        <authorList>
            <person name="Rasko D.A."/>
            <person name="Rosovitz M.J."/>
            <person name="Myers G.S.A."/>
            <person name="Mongodin E.F."/>
            <person name="Fricke W.F."/>
            <person name="Gajer P."/>
            <person name="Crabtree J."/>
            <person name="Sebaihia M."/>
            <person name="Thomson N.R."/>
            <person name="Chaudhuri R."/>
            <person name="Henderson I.R."/>
            <person name="Sperandio V."/>
            <person name="Ravel J."/>
        </authorList>
    </citation>
    <scope>NUCLEOTIDE SEQUENCE [LARGE SCALE GENOMIC DNA]</scope>
    <source>
        <strain>HS</strain>
    </source>
</reference>